<accession>Q92037</accession>
<feature type="chain" id="PRO_0000170940" description="Nitric oxide synthase, inducible">
    <location>
        <begin position="1" status="less than"/>
        <end position="164" status="greater than"/>
    </location>
</feature>
<feature type="domain" description="Flavodoxin-like" evidence="5">
    <location>
        <begin position="66"/>
        <end position="164" status="greater than"/>
    </location>
</feature>
<feature type="region of interest" description="Calmodulin-binding" evidence="4">
    <location>
        <begin position="42"/>
        <end position="62"/>
    </location>
</feature>
<feature type="binding site" evidence="2">
    <location>
        <position position="3"/>
    </location>
    <ligand>
        <name>(6R)-L-erythro-5,6,7,8-tetrahydrobiopterin</name>
        <dbReference type="ChEBI" id="CHEBI:59560"/>
    </ligand>
</feature>
<feature type="binding site" evidence="2">
    <location>
        <position position="18"/>
    </location>
    <ligand>
        <name>heme b</name>
        <dbReference type="ChEBI" id="CHEBI:60344"/>
    </ligand>
</feature>
<feature type="binding site" evidence="4">
    <location>
        <position position="72"/>
    </location>
    <ligand>
        <name>FMN</name>
        <dbReference type="ChEBI" id="CHEBI:58210"/>
    </ligand>
</feature>
<feature type="binding site" evidence="4">
    <location>
        <position position="73"/>
    </location>
    <ligand>
        <name>FMN</name>
        <dbReference type="ChEBI" id="CHEBI:58210"/>
    </ligand>
</feature>
<feature type="binding site" evidence="4">
    <location>
        <position position="74"/>
    </location>
    <ligand>
        <name>FMN</name>
        <dbReference type="ChEBI" id="CHEBI:58210"/>
    </ligand>
</feature>
<feature type="binding site" evidence="4">
    <location>
        <position position="76"/>
    </location>
    <ligand>
        <name>FMN</name>
        <dbReference type="ChEBI" id="CHEBI:58210"/>
    </ligand>
</feature>
<feature type="binding site" evidence="4">
    <location>
        <position position="77"/>
    </location>
    <ligand>
        <name>FMN</name>
        <dbReference type="ChEBI" id="CHEBI:58210"/>
    </ligand>
</feature>
<feature type="binding site" evidence="4">
    <location>
        <position position="118"/>
    </location>
    <ligand>
        <name>FMN</name>
        <dbReference type="ChEBI" id="CHEBI:58210"/>
    </ligand>
</feature>
<feature type="binding site" evidence="4">
    <location>
        <position position="119"/>
    </location>
    <ligand>
        <name>FMN</name>
        <dbReference type="ChEBI" id="CHEBI:58210"/>
    </ligand>
</feature>
<feature type="binding site" evidence="4">
    <location>
        <position position="155"/>
    </location>
    <ligand>
        <name>FMN</name>
        <dbReference type="ChEBI" id="CHEBI:58210"/>
    </ligand>
</feature>
<feature type="binding site" evidence="4">
    <location>
        <position position="162"/>
    </location>
    <ligand>
        <name>FMN</name>
        <dbReference type="ChEBI" id="CHEBI:58210"/>
    </ligand>
</feature>
<feature type="non-terminal residue">
    <location>
        <position position="1"/>
    </location>
</feature>
<feature type="non-terminal residue">
    <location>
        <position position="164"/>
    </location>
</feature>
<proteinExistence type="evidence at transcript level"/>
<dbReference type="EC" id="1.14.13.39" evidence="4"/>
<dbReference type="EMBL" id="X97603">
    <property type="protein sequence ID" value="CAA66203.1"/>
    <property type="molecule type" value="mRNA"/>
</dbReference>
<dbReference type="SMR" id="Q92037"/>
<dbReference type="Proteomes" id="UP000515129">
    <property type="component" value="Unplaced"/>
</dbReference>
<dbReference type="GO" id="GO:0005829">
    <property type="term" value="C:cytosol"/>
    <property type="evidence" value="ECO:0007669"/>
    <property type="project" value="UniProtKB-SubCell"/>
</dbReference>
<dbReference type="GO" id="GO:0005516">
    <property type="term" value="F:calmodulin binding"/>
    <property type="evidence" value="ECO:0007669"/>
    <property type="project" value="UniProtKB-KW"/>
</dbReference>
<dbReference type="GO" id="GO:0010181">
    <property type="term" value="F:FMN binding"/>
    <property type="evidence" value="ECO:0007669"/>
    <property type="project" value="InterPro"/>
</dbReference>
<dbReference type="GO" id="GO:0046872">
    <property type="term" value="F:metal ion binding"/>
    <property type="evidence" value="ECO:0007669"/>
    <property type="project" value="UniProtKB-KW"/>
</dbReference>
<dbReference type="GO" id="GO:0004517">
    <property type="term" value="F:nitric-oxide synthase activity"/>
    <property type="evidence" value="ECO:0000250"/>
    <property type="project" value="UniProtKB"/>
</dbReference>
<dbReference type="GO" id="GO:0006809">
    <property type="term" value="P:nitric oxide biosynthetic process"/>
    <property type="evidence" value="ECO:0007669"/>
    <property type="project" value="InterPro"/>
</dbReference>
<dbReference type="GO" id="GO:0018119">
    <property type="term" value="P:peptidyl-cysteine S-nitrosylation"/>
    <property type="evidence" value="ECO:0000250"/>
    <property type="project" value="UniProtKB"/>
</dbReference>
<dbReference type="FunFam" id="3.40.50.360:FF:000019">
    <property type="entry name" value="Nitric oxide synthase"/>
    <property type="match status" value="1"/>
</dbReference>
<dbReference type="Gene3D" id="3.40.50.360">
    <property type="match status" value="1"/>
</dbReference>
<dbReference type="Gene3D" id="6.10.250.410">
    <property type="match status" value="1"/>
</dbReference>
<dbReference type="InterPro" id="IPR001094">
    <property type="entry name" value="Flavdoxin-like"/>
</dbReference>
<dbReference type="InterPro" id="IPR008254">
    <property type="entry name" value="Flavodoxin/NO_synth"/>
</dbReference>
<dbReference type="InterPro" id="IPR029039">
    <property type="entry name" value="Flavoprotein-like_sf"/>
</dbReference>
<dbReference type="InterPro" id="IPR050607">
    <property type="entry name" value="NOS"/>
</dbReference>
<dbReference type="InterPro" id="IPR036119">
    <property type="entry name" value="NOS_N_sf"/>
</dbReference>
<dbReference type="PANTHER" id="PTHR43410:SF1">
    <property type="entry name" value="NITRIC OXIDE SYNTHASE"/>
    <property type="match status" value="1"/>
</dbReference>
<dbReference type="PANTHER" id="PTHR43410">
    <property type="entry name" value="NITRIC OXIDE SYNTHASE OXYGENASE"/>
    <property type="match status" value="1"/>
</dbReference>
<dbReference type="Pfam" id="PF00258">
    <property type="entry name" value="Flavodoxin_1"/>
    <property type="match status" value="1"/>
</dbReference>
<dbReference type="PRINTS" id="PR00369">
    <property type="entry name" value="FLAVODOXIN"/>
</dbReference>
<dbReference type="SUPFAM" id="SSF52218">
    <property type="entry name" value="Flavoproteins"/>
    <property type="match status" value="1"/>
</dbReference>
<dbReference type="SUPFAM" id="SSF56512">
    <property type="entry name" value="Nitric oxide (NO) synthase oxygenase domain"/>
    <property type="match status" value="1"/>
</dbReference>
<dbReference type="PROSITE" id="PS50902">
    <property type="entry name" value="FLAVODOXIN_LIKE"/>
    <property type="match status" value="1"/>
</dbReference>
<evidence type="ECO:0000250" key="1"/>
<evidence type="ECO:0000250" key="2">
    <source>
        <dbReference type="UniProtKB" id="P29474"/>
    </source>
</evidence>
<evidence type="ECO:0000250" key="3">
    <source>
        <dbReference type="UniProtKB" id="P29476"/>
    </source>
</evidence>
<evidence type="ECO:0000250" key="4">
    <source>
        <dbReference type="UniProtKB" id="P35228"/>
    </source>
</evidence>
<evidence type="ECO:0000255" key="5">
    <source>
        <dbReference type="PROSITE-ProRule" id="PRU00088"/>
    </source>
</evidence>
<evidence type="ECO:0000305" key="6"/>
<keyword id="KW-0112">Calmodulin-binding</keyword>
<keyword id="KW-0963">Cytoplasm</keyword>
<keyword id="KW-0274">FAD</keyword>
<keyword id="KW-0285">Flavoprotein</keyword>
<keyword id="KW-0288">FMN</keyword>
<keyword id="KW-0349">Heme</keyword>
<keyword id="KW-0408">Iron</keyword>
<keyword id="KW-0479">Metal-binding</keyword>
<keyword id="KW-0521">NADP</keyword>
<keyword id="KW-0560">Oxidoreductase</keyword>
<keyword id="KW-1185">Reference proteome</keyword>
<name>NOS2_CARAU</name>
<sequence length="164" mass="19045">FGFHQQMLNYILSPFFYYQPDPWLTHKWKDEKRNMRKHSISFKGLIRAVLFSQTLIKSALAKRVRCTVLYATETGKSKTLAKKLNTMMNYAFSSKVVCMEDYNFSELEKESLLFVVTSTFGNGDCPGNGESFKKQLLSLNNLRNQVRYSVFGLGSRMYPHFCAF</sequence>
<reference key="1">
    <citation type="journal article" date="1996" name="Immunol. Cell Biol.">
        <title>A partial sequence for nitric oxide synthase from a goldfish (Carassius auratus) macrophage cell line.</title>
        <authorList>
            <person name="Laing K.J."/>
            <person name="Grawbowski P.S."/>
            <person name="Belosevic M."/>
            <person name="Secombes C.J."/>
        </authorList>
    </citation>
    <scope>NUCLEOTIDE SEQUENCE [MRNA]</scope>
    <source>
        <tissue>Macrophage</tissue>
    </source>
</reference>
<organism>
    <name type="scientific">Carassius auratus</name>
    <name type="common">Goldfish</name>
    <dbReference type="NCBI Taxonomy" id="7957"/>
    <lineage>
        <taxon>Eukaryota</taxon>
        <taxon>Metazoa</taxon>
        <taxon>Chordata</taxon>
        <taxon>Craniata</taxon>
        <taxon>Vertebrata</taxon>
        <taxon>Euteleostomi</taxon>
        <taxon>Actinopterygii</taxon>
        <taxon>Neopterygii</taxon>
        <taxon>Teleostei</taxon>
        <taxon>Ostariophysi</taxon>
        <taxon>Cypriniformes</taxon>
        <taxon>Cyprinidae</taxon>
        <taxon>Cyprininae</taxon>
        <taxon>Carassius</taxon>
    </lineage>
</organism>
<comment type="function">
    <text evidence="4">Produces nitric oxide (NO) which is a messenger molecule with diverse functions throughout the body. In macrophages, NO mediates tumoricidal and bactericidal actions. Also has nitrosylase activity and mediates cysteine S-nitrosylation of cytoplasmic target proteins such COX2 (By similarity).</text>
</comment>
<comment type="catalytic activity">
    <reaction evidence="4">
        <text>2 L-arginine + 3 NADPH + 4 O2 + H(+) = 2 L-citrulline + 2 nitric oxide + 3 NADP(+) + 4 H2O</text>
        <dbReference type="Rhea" id="RHEA:19897"/>
        <dbReference type="ChEBI" id="CHEBI:15377"/>
        <dbReference type="ChEBI" id="CHEBI:15378"/>
        <dbReference type="ChEBI" id="CHEBI:15379"/>
        <dbReference type="ChEBI" id="CHEBI:16480"/>
        <dbReference type="ChEBI" id="CHEBI:32682"/>
        <dbReference type="ChEBI" id="CHEBI:57743"/>
        <dbReference type="ChEBI" id="CHEBI:57783"/>
        <dbReference type="ChEBI" id="CHEBI:58349"/>
        <dbReference type="EC" id="1.14.13.39"/>
    </reaction>
    <physiologicalReaction direction="left-to-right" evidence="4">
        <dbReference type="Rhea" id="RHEA:19898"/>
    </physiologicalReaction>
</comment>
<comment type="cofactor">
    <cofactor evidence="4">
        <name>heme b</name>
        <dbReference type="ChEBI" id="CHEBI:60344"/>
    </cofactor>
</comment>
<comment type="cofactor">
    <cofactor evidence="3">
        <name>FAD</name>
        <dbReference type="ChEBI" id="CHEBI:57692"/>
    </cofactor>
    <text evidence="3">Binds 1 FAD.</text>
</comment>
<comment type="cofactor">
    <cofactor evidence="4">
        <name>FMN</name>
        <dbReference type="ChEBI" id="CHEBI:58210"/>
    </cofactor>
    <text evidence="4">Binds 1 FMN.</text>
</comment>
<comment type="cofactor">
    <cofactor evidence="4">
        <name>(6R)-L-erythro-5,6,7,8-tetrahydrobiopterin</name>
        <dbReference type="ChEBI" id="CHEBI:59560"/>
    </cofactor>
    <text evidence="4">Tetrahydrobiopterin (BH4). May stabilize the dimeric form of the enzyme.</text>
</comment>
<comment type="activity regulation">
    <text evidence="1">Not stimulated by calcium/calmodulin.</text>
</comment>
<comment type="subunit">
    <text evidence="4">Homodimer.</text>
</comment>
<comment type="subcellular location">
    <subcellularLocation>
        <location evidence="4">Cytoplasm</location>
        <location evidence="4">Cytosol</location>
    </subcellularLocation>
</comment>
<comment type="induction">
    <text>By lipopolysaccharide (LPS).</text>
</comment>
<comment type="similarity">
    <text evidence="6">Belongs to the NOS family.</text>
</comment>
<gene>
    <name type="primary">nos2</name>
</gene>
<protein>
    <recommendedName>
        <fullName>Nitric oxide synthase, inducible</fullName>
        <ecNumber evidence="4">1.14.13.39</ecNumber>
    </recommendedName>
    <alternativeName>
        <fullName>Inducible NO synthase</fullName>
        <shortName>Inducible NOS</shortName>
        <shortName>iNOS</shortName>
    </alternativeName>
    <alternativeName>
        <fullName>NOS type II</fullName>
    </alternativeName>
    <alternativeName>
        <fullName>Peptidyl-cysteine S-nitrosylase NOS2</fullName>
    </alternativeName>
</protein>